<dbReference type="EMBL" id="CP001127">
    <property type="protein sequence ID" value="ACF89507.1"/>
    <property type="molecule type" value="Genomic_DNA"/>
</dbReference>
<dbReference type="RefSeq" id="WP_000887832.1">
    <property type="nucleotide sequence ID" value="NC_011094.1"/>
</dbReference>
<dbReference type="SMR" id="B4TSC0"/>
<dbReference type="GeneID" id="66758552"/>
<dbReference type="KEGG" id="sew:SeSA_A4594"/>
<dbReference type="HOGENOM" id="CLU_098807_3_0_6"/>
<dbReference type="Proteomes" id="UP000001865">
    <property type="component" value="Chromosome"/>
</dbReference>
<dbReference type="GO" id="GO:0005737">
    <property type="term" value="C:cytoplasm"/>
    <property type="evidence" value="ECO:0007669"/>
    <property type="project" value="UniProtKB-SubCell"/>
</dbReference>
<dbReference type="GO" id="GO:0005507">
    <property type="term" value="F:copper ion binding"/>
    <property type="evidence" value="ECO:0007669"/>
    <property type="project" value="UniProtKB-UniRule"/>
</dbReference>
<dbReference type="GO" id="GO:0010038">
    <property type="term" value="P:response to metal ion"/>
    <property type="evidence" value="ECO:0007669"/>
    <property type="project" value="InterPro"/>
</dbReference>
<dbReference type="FunFam" id="3.30.70.120:FF:000004">
    <property type="entry name" value="Divalent-cation tolerance protein CutA"/>
    <property type="match status" value="1"/>
</dbReference>
<dbReference type="Gene3D" id="3.30.70.120">
    <property type="match status" value="1"/>
</dbReference>
<dbReference type="HAMAP" id="MF_01160">
    <property type="entry name" value="CutA"/>
    <property type="match status" value="1"/>
</dbReference>
<dbReference type="InterPro" id="IPR023700">
    <property type="entry name" value="CutA_Enterobact"/>
</dbReference>
<dbReference type="InterPro" id="IPR004323">
    <property type="entry name" value="Ion_tolerance_CutA"/>
</dbReference>
<dbReference type="InterPro" id="IPR011322">
    <property type="entry name" value="N-reg_PII-like_a/b"/>
</dbReference>
<dbReference type="InterPro" id="IPR015867">
    <property type="entry name" value="N-reg_PII/ATP_PRibTrfase_C"/>
</dbReference>
<dbReference type="NCBIfam" id="NF007930">
    <property type="entry name" value="PRK10645.1"/>
    <property type="match status" value="1"/>
</dbReference>
<dbReference type="PANTHER" id="PTHR23419">
    <property type="entry name" value="DIVALENT CATION TOLERANCE CUTA-RELATED"/>
    <property type="match status" value="1"/>
</dbReference>
<dbReference type="PANTHER" id="PTHR23419:SF8">
    <property type="entry name" value="FI09726P"/>
    <property type="match status" value="1"/>
</dbReference>
<dbReference type="Pfam" id="PF03091">
    <property type="entry name" value="CutA1"/>
    <property type="match status" value="1"/>
</dbReference>
<dbReference type="SUPFAM" id="SSF54913">
    <property type="entry name" value="GlnB-like"/>
    <property type="match status" value="1"/>
</dbReference>
<comment type="function">
    <text evidence="1">Involved in resistance toward heavy metals.</text>
</comment>
<comment type="cofactor">
    <cofactor evidence="1">
        <name>Cu cation</name>
        <dbReference type="ChEBI" id="CHEBI:23378"/>
    </cofactor>
    <text evidence="1">Binds 1 copper ion per subunit.</text>
</comment>
<comment type="subunit">
    <text evidence="1">Homotrimer.</text>
</comment>
<comment type="subcellular location">
    <subcellularLocation>
        <location evidence="1">Cytoplasm</location>
    </subcellularLocation>
</comment>
<comment type="similarity">
    <text evidence="1">Belongs to the CutA family.</text>
</comment>
<accession>B4TSC0</accession>
<keyword id="KW-0186">Copper</keyword>
<keyword id="KW-0963">Cytoplasm</keyword>
<keyword id="KW-0479">Metal-binding</keyword>
<organism>
    <name type="scientific">Salmonella schwarzengrund (strain CVM19633)</name>
    <dbReference type="NCBI Taxonomy" id="439843"/>
    <lineage>
        <taxon>Bacteria</taxon>
        <taxon>Pseudomonadati</taxon>
        <taxon>Pseudomonadota</taxon>
        <taxon>Gammaproteobacteria</taxon>
        <taxon>Enterobacterales</taxon>
        <taxon>Enterobacteriaceae</taxon>
        <taxon>Salmonella</taxon>
    </lineage>
</organism>
<gene>
    <name evidence="1" type="primary">cutA</name>
    <name type="ordered locus">SeSA_A4594</name>
</gene>
<evidence type="ECO:0000255" key="1">
    <source>
        <dbReference type="HAMAP-Rule" id="MF_01160"/>
    </source>
</evidence>
<reference key="1">
    <citation type="journal article" date="2011" name="J. Bacteriol.">
        <title>Comparative genomics of 28 Salmonella enterica isolates: evidence for CRISPR-mediated adaptive sublineage evolution.</title>
        <authorList>
            <person name="Fricke W.F."/>
            <person name="Mammel M.K."/>
            <person name="McDermott P.F."/>
            <person name="Tartera C."/>
            <person name="White D.G."/>
            <person name="Leclerc J.E."/>
            <person name="Ravel J."/>
            <person name="Cebula T.A."/>
        </authorList>
    </citation>
    <scope>NUCLEOTIDE SEQUENCE [LARGE SCALE GENOMIC DNA]</scope>
    <source>
        <strain>CVM19633</strain>
    </source>
</reference>
<proteinExistence type="inferred from homology"/>
<protein>
    <recommendedName>
        <fullName evidence="1">Divalent-cation tolerance protein CutA</fullName>
    </recommendedName>
</protein>
<sequence>MLDVKSQDISIPEAVVVLCTAPDEATAQDLAAKVLAEKLAACATLLPGATSLYYWEGKLEQEYEVQMILKTTVSHQQALIDCLKSHHPYQTPELLVLPVTHGDTDYLSWLNASLR</sequence>
<feature type="chain" id="PRO_1000137854" description="Divalent-cation tolerance protein CutA">
    <location>
        <begin position="1"/>
        <end position="115"/>
    </location>
</feature>
<feature type="binding site" evidence="1">
    <location>
        <position position="19"/>
    </location>
    <ligand>
        <name>Cu cation</name>
        <dbReference type="ChEBI" id="CHEBI:23378"/>
    </ligand>
</feature>
<feature type="binding site" evidence="1">
    <location>
        <position position="86"/>
    </location>
    <ligand>
        <name>Cu cation</name>
        <dbReference type="ChEBI" id="CHEBI:23378"/>
    </ligand>
</feature>
<feature type="binding site" evidence="1">
    <location>
        <position position="87"/>
    </location>
    <ligand>
        <name>Cu cation</name>
        <dbReference type="ChEBI" id="CHEBI:23378"/>
    </ligand>
</feature>
<name>CUTA_SALSV</name>